<organism>
    <name type="scientific">Lactobacillus gasseri (strain ATCC 33323 / DSM 20243 / BCRC 14619 / CIP 102991 / JCM 1131 / KCTC 3163 / NCIMB 11718 / NCTC 13722 / AM63)</name>
    <dbReference type="NCBI Taxonomy" id="324831"/>
    <lineage>
        <taxon>Bacteria</taxon>
        <taxon>Bacillati</taxon>
        <taxon>Bacillota</taxon>
        <taxon>Bacilli</taxon>
        <taxon>Lactobacillales</taxon>
        <taxon>Lactobacillaceae</taxon>
        <taxon>Lactobacillus</taxon>
    </lineage>
</organism>
<accession>Q042S6</accession>
<protein>
    <recommendedName>
        <fullName evidence="1">Phosphopantetheine adenylyltransferase</fullName>
        <ecNumber evidence="1">2.7.7.3</ecNumber>
    </recommendedName>
    <alternativeName>
        <fullName evidence="1">Dephospho-CoA pyrophosphorylase</fullName>
    </alternativeName>
    <alternativeName>
        <fullName evidence="1">Pantetheine-phosphate adenylyltransferase</fullName>
        <shortName evidence="1">PPAT</shortName>
    </alternativeName>
</protein>
<gene>
    <name evidence="1" type="primary">coaD</name>
    <name type="ordered locus">LGAS_1177</name>
</gene>
<evidence type="ECO:0000255" key="1">
    <source>
        <dbReference type="HAMAP-Rule" id="MF_00151"/>
    </source>
</evidence>
<keyword id="KW-0067">ATP-binding</keyword>
<keyword id="KW-0173">Coenzyme A biosynthesis</keyword>
<keyword id="KW-0963">Cytoplasm</keyword>
<keyword id="KW-0460">Magnesium</keyword>
<keyword id="KW-0547">Nucleotide-binding</keyword>
<keyword id="KW-0548">Nucleotidyltransferase</keyword>
<keyword id="KW-0808">Transferase</keyword>
<comment type="function">
    <text evidence="1">Reversibly transfers an adenylyl group from ATP to 4'-phosphopantetheine, yielding dephospho-CoA (dPCoA) and pyrophosphate.</text>
</comment>
<comment type="catalytic activity">
    <reaction evidence="1">
        <text>(R)-4'-phosphopantetheine + ATP + H(+) = 3'-dephospho-CoA + diphosphate</text>
        <dbReference type="Rhea" id="RHEA:19801"/>
        <dbReference type="ChEBI" id="CHEBI:15378"/>
        <dbReference type="ChEBI" id="CHEBI:30616"/>
        <dbReference type="ChEBI" id="CHEBI:33019"/>
        <dbReference type="ChEBI" id="CHEBI:57328"/>
        <dbReference type="ChEBI" id="CHEBI:61723"/>
        <dbReference type="EC" id="2.7.7.3"/>
    </reaction>
</comment>
<comment type="cofactor">
    <cofactor evidence="1">
        <name>Mg(2+)</name>
        <dbReference type="ChEBI" id="CHEBI:18420"/>
    </cofactor>
</comment>
<comment type="pathway">
    <text evidence="1">Cofactor biosynthesis; coenzyme A biosynthesis; CoA from (R)-pantothenate: step 4/5.</text>
</comment>
<comment type="subunit">
    <text evidence="1">Homohexamer.</text>
</comment>
<comment type="subcellular location">
    <subcellularLocation>
        <location evidence="1">Cytoplasm</location>
    </subcellularLocation>
</comment>
<comment type="similarity">
    <text evidence="1">Belongs to the bacterial CoaD family.</text>
</comment>
<feature type="chain" id="PRO_1000011164" description="Phosphopantetheine adenylyltransferase">
    <location>
        <begin position="1"/>
        <end position="166"/>
    </location>
</feature>
<feature type="binding site" evidence="1">
    <location>
        <begin position="9"/>
        <end position="10"/>
    </location>
    <ligand>
        <name>ATP</name>
        <dbReference type="ChEBI" id="CHEBI:30616"/>
    </ligand>
</feature>
<feature type="binding site" evidence="1">
    <location>
        <position position="9"/>
    </location>
    <ligand>
        <name>substrate</name>
    </ligand>
</feature>
<feature type="binding site" evidence="1">
    <location>
        <position position="17"/>
    </location>
    <ligand>
        <name>ATP</name>
        <dbReference type="ChEBI" id="CHEBI:30616"/>
    </ligand>
</feature>
<feature type="binding site" evidence="1">
    <location>
        <position position="41"/>
    </location>
    <ligand>
        <name>substrate</name>
    </ligand>
</feature>
<feature type="binding site" evidence="1">
    <location>
        <position position="74"/>
    </location>
    <ligand>
        <name>substrate</name>
    </ligand>
</feature>
<feature type="binding site" evidence="1">
    <location>
        <position position="88"/>
    </location>
    <ligand>
        <name>substrate</name>
    </ligand>
</feature>
<feature type="binding site" evidence="1">
    <location>
        <begin position="89"/>
        <end position="91"/>
    </location>
    <ligand>
        <name>ATP</name>
        <dbReference type="ChEBI" id="CHEBI:30616"/>
    </ligand>
</feature>
<feature type="binding site" evidence="1">
    <location>
        <position position="99"/>
    </location>
    <ligand>
        <name>ATP</name>
        <dbReference type="ChEBI" id="CHEBI:30616"/>
    </ligand>
</feature>
<feature type="binding site" evidence="1">
    <location>
        <begin position="124"/>
        <end position="130"/>
    </location>
    <ligand>
        <name>ATP</name>
        <dbReference type="ChEBI" id="CHEBI:30616"/>
    </ligand>
</feature>
<feature type="site" description="Transition state stabilizer" evidence="1">
    <location>
        <position position="17"/>
    </location>
</feature>
<name>COAD_LACGA</name>
<reference key="1">
    <citation type="journal article" date="2006" name="Proc. Natl. Acad. Sci. U.S.A.">
        <title>Comparative genomics of the lactic acid bacteria.</title>
        <authorList>
            <person name="Makarova K.S."/>
            <person name="Slesarev A."/>
            <person name="Wolf Y.I."/>
            <person name="Sorokin A."/>
            <person name="Mirkin B."/>
            <person name="Koonin E.V."/>
            <person name="Pavlov A."/>
            <person name="Pavlova N."/>
            <person name="Karamychev V."/>
            <person name="Polouchine N."/>
            <person name="Shakhova V."/>
            <person name="Grigoriev I."/>
            <person name="Lou Y."/>
            <person name="Rohksar D."/>
            <person name="Lucas S."/>
            <person name="Huang K."/>
            <person name="Goodstein D.M."/>
            <person name="Hawkins T."/>
            <person name="Plengvidhya V."/>
            <person name="Welker D."/>
            <person name="Hughes J."/>
            <person name="Goh Y."/>
            <person name="Benson A."/>
            <person name="Baldwin K."/>
            <person name="Lee J.-H."/>
            <person name="Diaz-Muniz I."/>
            <person name="Dosti B."/>
            <person name="Smeianov V."/>
            <person name="Wechter W."/>
            <person name="Barabote R."/>
            <person name="Lorca G."/>
            <person name="Altermann E."/>
            <person name="Barrangou R."/>
            <person name="Ganesan B."/>
            <person name="Xie Y."/>
            <person name="Rawsthorne H."/>
            <person name="Tamir D."/>
            <person name="Parker C."/>
            <person name="Breidt F."/>
            <person name="Broadbent J.R."/>
            <person name="Hutkins R."/>
            <person name="O'Sullivan D."/>
            <person name="Steele J."/>
            <person name="Unlu G."/>
            <person name="Saier M.H. Jr."/>
            <person name="Klaenhammer T."/>
            <person name="Richardson P."/>
            <person name="Kozyavkin S."/>
            <person name="Weimer B.C."/>
            <person name="Mills D.A."/>
        </authorList>
    </citation>
    <scope>NUCLEOTIDE SEQUENCE [LARGE SCALE GENOMIC DNA]</scope>
    <source>
        <strain>ATCC 33323 / DSM 20243 / BCRC 14619 / CIP 102991 / JCM 1131 / KCTC 3163 / NCIMB 11718 / NCTC 13722 / AM63</strain>
    </source>
</reference>
<sequence length="166" mass="18621">MTKAIFPGSFDPITNGHAEVVEAAARMFEKLYVVIMTNTSKKYLFDEKERLDLAKKVFENDKNIEVIARPAELTVEVAHELNAGAIVRGLRNTTDFNYERDIAGINKTLDPKLNTVLLFTRPEDSFISSSMIKETVFFGGNVSTLVPKPVAAALEEKLRNQNNEEK</sequence>
<dbReference type="EC" id="2.7.7.3" evidence="1"/>
<dbReference type="EMBL" id="CP000413">
    <property type="protein sequence ID" value="ABJ60546.1"/>
    <property type="molecule type" value="Genomic_DNA"/>
</dbReference>
<dbReference type="RefSeq" id="WP_003647128.1">
    <property type="nucleotide sequence ID" value="NZ_WBMG01000002.1"/>
</dbReference>
<dbReference type="SMR" id="Q042S6"/>
<dbReference type="GeneID" id="29639009"/>
<dbReference type="KEGG" id="lga:LGAS_1177"/>
<dbReference type="HOGENOM" id="CLU_100149_1_1_9"/>
<dbReference type="BioCyc" id="LGAS324831:G1G6Y-1173-MONOMER"/>
<dbReference type="UniPathway" id="UPA00241">
    <property type="reaction ID" value="UER00355"/>
</dbReference>
<dbReference type="Proteomes" id="UP000000664">
    <property type="component" value="Chromosome"/>
</dbReference>
<dbReference type="GO" id="GO:0005737">
    <property type="term" value="C:cytoplasm"/>
    <property type="evidence" value="ECO:0007669"/>
    <property type="project" value="UniProtKB-SubCell"/>
</dbReference>
<dbReference type="GO" id="GO:0005524">
    <property type="term" value="F:ATP binding"/>
    <property type="evidence" value="ECO:0007669"/>
    <property type="project" value="UniProtKB-KW"/>
</dbReference>
<dbReference type="GO" id="GO:0004595">
    <property type="term" value="F:pantetheine-phosphate adenylyltransferase activity"/>
    <property type="evidence" value="ECO:0007669"/>
    <property type="project" value="UniProtKB-UniRule"/>
</dbReference>
<dbReference type="GO" id="GO:0015937">
    <property type="term" value="P:coenzyme A biosynthetic process"/>
    <property type="evidence" value="ECO:0007669"/>
    <property type="project" value="UniProtKB-UniRule"/>
</dbReference>
<dbReference type="CDD" id="cd02163">
    <property type="entry name" value="PPAT"/>
    <property type="match status" value="1"/>
</dbReference>
<dbReference type="Gene3D" id="3.40.50.620">
    <property type="entry name" value="HUPs"/>
    <property type="match status" value="1"/>
</dbReference>
<dbReference type="HAMAP" id="MF_00151">
    <property type="entry name" value="PPAT_bact"/>
    <property type="match status" value="1"/>
</dbReference>
<dbReference type="InterPro" id="IPR004821">
    <property type="entry name" value="Cyt_trans-like"/>
</dbReference>
<dbReference type="InterPro" id="IPR001980">
    <property type="entry name" value="PPAT"/>
</dbReference>
<dbReference type="InterPro" id="IPR014729">
    <property type="entry name" value="Rossmann-like_a/b/a_fold"/>
</dbReference>
<dbReference type="NCBIfam" id="TIGR01510">
    <property type="entry name" value="coaD_prev_kdtB"/>
    <property type="match status" value="1"/>
</dbReference>
<dbReference type="NCBIfam" id="TIGR00125">
    <property type="entry name" value="cyt_tran_rel"/>
    <property type="match status" value="1"/>
</dbReference>
<dbReference type="PANTHER" id="PTHR21342">
    <property type="entry name" value="PHOSPHOPANTETHEINE ADENYLYLTRANSFERASE"/>
    <property type="match status" value="1"/>
</dbReference>
<dbReference type="PANTHER" id="PTHR21342:SF1">
    <property type="entry name" value="PHOSPHOPANTETHEINE ADENYLYLTRANSFERASE"/>
    <property type="match status" value="1"/>
</dbReference>
<dbReference type="Pfam" id="PF01467">
    <property type="entry name" value="CTP_transf_like"/>
    <property type="match status" value="1"/>
</dbReference>
<dbReference type="PRINTS" id="PR01020">
    <property type="entry name" value="LPSBIOSNTHSS"/>
</dbReference>
<dbReference type="SUPFAM" id="SSF52374">
    <property type="entry name" value="Nucleotidylyl transferase"/>
    <property type="match status" value="1"/>
</dbReference>
<proteinExistence type="inferred from homology"/>